<gene>
    <name type="primary">LUP2</name>
    <name type="ordered locus">At1g78960</name>
    <name type="ORF">YUP8H12R.43</name>
</gene>
<proteinExistence type="evidence at protein level"/>
<name>LUP2_ARATH</name>
<protein>
    <recommendedName>
        <fullName>Amyrin synthase LUP2</fullName>
        <ecNumber>5.4.99.39</ecNumber>
        <ecNumber>5.4.99.40</ecNumber>
        <ecNumber>5.4.99.41</ecNumber>
    </recommendedName>
    <alternativeName>
        <fullName>Alpha-amyrin synthase</fullName>
    </alternativeName>
    <alternativeName>
        <fullName>Beta-amyrin synthase</fullName>
    </alternativeName>
    <alternativeName>
        <fullName>Lupeol synthase 2</fullName>
        <shortName>AtLUP2</shortName>
    </alternativeName>
</protein>
<comment type="function">
    <text evidence="2 3">Multifunctional enzyme that converts oxidosqualene to nine different triterpenes, mainly lupeol, beta-amyrin and alpha-amyrin in a 15:50:30 ratio.</text>
</comment>
<comment type="catalytic activity">
    <reaction evidence="2">
        <text>(S)-2,3-epoxysqualene = beta-amyrin</text>
        <dbReference type="Rhea" id="RHEA:31007"/>
        <dbReference type="ChEBI" id="CHEBI:10352"/>
        <dbReference type="ChEBI" id="CHEBI:15441"/>
        <dbReference type="EC" id="5.4.99.39"/>
    </reaction>
</comment>
<comment type="catalytic activity">
    <reaction evidence="2">
        <text>(S)-2,3-epoxysqualene = alpha-amyrin</text>
        <dbReference type="Rhea" id="RHEA:31387"/>
        <dbReference type="ChEBI" id="CHEBI:10213"/>
        <dbReference type="ChEBI" id="CHEBI:15441"/>
        <dbReference type="EC" id="5.4.99.40"/>
    </reaction>
</comment>
<comment type="catalytic activity">
    <reaction evidence="2">
        <text>(S)-2,3-epoxysqualene = lupeol</text>
        <dbReference type="Rhea" id="RHEA:31383"/>
        <dbReference type="ChEBI" id="CHEBI:6570"/>
        <dbReference type="ChEBI" id="CHEBI:15441"/>
        <dbReference type="EC" id="5.4.99.41"/>
    </reaction>
</comment>
<comment type="similarity">
    <text evidence="4">Belongs to the terpene cyclase/mutase family.</text>
</comment>
<comment type="sequence caution" evidence="4">
    <conflict type="erroneous gene model prediction">
        <sequence resource="EMBL-CDS" id="AAC17070"/>
    </conflict>
</comment>
<comment type="sequence caution" evidence="4">
    <conflict type="erroneous initiation">
        <sequence resource="EMBL-CDS" id="BAD94022"/>
    </conflict>
</comment>
<keyword id="KW-0413">Isomerase</keyword>
<keyword id="KW-1185">Reference proteome</keyword>
<keyword id="KW-0677">Repeat</keyword>
<organism>
    <name type="scientific">Arabidopsis thaliana</name>
    <name type="common">Mouse-ear cress</name>
    <dbReference type="NCBI Taxonomy" id="3702"/>
    <lineage>
        <taxon>Eukaryota</taxon>
        <taxon>Viridiplantae</taxon>
        <taxon>Streptophyta</taxon>
        <taxon>Embryophyta</taxon>
        <taxon>Tracheophyta</taxon>
        <taxon>Spermatophyta</taxon>
        <taxon>Magnoliopsida</taxon>
        <taxon>eudicotyledons</taxon>
        <taxon>Gunneridae</taxon>
        <taxon>Pentapetalae</taxon>
        <taxon>rosids</taxon>
        <taxon>malvids</taxon>
        <taxon>Brassicales</taxon>
        <taxon>Brassicaceae</taxon>
        <taxon>Camelineae</taxon>
        <taxon>Arabidopsis</taxon>
    </lineage>
</organism>
<dbReference type="EC" id="5.4.99.39"/>
<dbReference type="EC" id="5.4.99.40"/>
<dbReference type="EC" id="5.4.99.41"/>
<dbReference type="EMBL" id="AC002986">
    <property type="protein sequence ID" value="AAC17070.1"/>
    <property type="status" value="ALT_SEQ"/>
    <property type="molecule type" value="Genomic_DNA"/>
</dbReference>
<dbReference type="EMBL" id="CP002684">
    <property type="protein sequence ID" value="AEE36185.1"/>
    <property type="molecule type" value="Genomic_DNA"/>
</dbReference>
<dbReference type="EMBL" id="CP002684">
    <property type="protein sequence ID" value="ANM60689.1"/>
    <property type="molecule type" value="Genomic_DNA"/>
</dbReference>
<dbReference type="EMBL" id="CP002684">
    <property type="protein sequence ID" value="ANM60690.1"/>
    <property type="molecule type" value="Genomic_DNA"/>
</dbReference>
<dbReference type="EMBL" id="AY091131">
    <property type="protein sequence ID" value="AAM14080.1"/>
    <property type="molecule type" value="mRNA"/>
</dbReference>
<dbReference type="EMBL" id="AY114039">
    <property type="protein sequence ID" value="AAM45087.1"/>
    <property type="molecule type" value="mRNA"/>
</dbReference>
<dbReference type="EMBL" id="AF003472">
    <property type="protein sequence ID" value="AAC98864.1"/>
    <property type="molecule type" value="mRNA"/>
</dbReference>
<dbReference type="EMBL" id="AK230119">
    <property type="protein sequence ID" value="BAF01935.1"/>
    <property type="molecule type" value="mRNA"/>
</dbReference>
<dbReference type="EMBL" id="AK221820">
    <property type="protein sequence ID" value="BAD94022.1"/>
    <property type="status" value="ALT_INIT"/>
    <property type="molecule type" value="mRNA"/>
</dbReference>
<dbReference type="PIR" id="T01059">
    <property type="entry name" value="T01059"/>
</dbReference>
<dbReference type="RefSeq" id="NP_001322959.1">
    <property type="nucleotide sequence ID" value="NM_001334861.1"/>
</dbReference>
<dbReference type="RefSeq" id="NP_001322960.1">
    <property type="nucleotide sequence ID" value="NM_001334862.1"/>
</dbReference>
<dbReference type="RefSeq" id="NP_178017.2">
    <property type="nucleotide sequence ID" value="NM_106545.4"/>
</dbReference>
<dbReference type="SMR" id="Q8RWT0"/>
<dbReference type="FunCoup" id="Q8RWT0">
    <property type="interactions" value="985"/>
</dbReference>
<dbReference type="STRING" id="3702.Q8RWT0"/>
<dbReference type="PaxDb" id="3702-AT1G78960.1"/>
<dbReference type="ProteomicsDB" id="238785"/>
<dbReference type="EnsemblPlants" id="AT1G78960.1">
    <property type="protein sequence ID" value="AT1G78960.1"/>
    <property type="gene ID" value="AT1G78960"/>
</dbReference>
<dbReference type="EnsemblPlants" id="AT1G78960.2">
    <property type="protein sequence ID" value="AT1G78960.2"/>
    <property type="gene ID" value="AT1G78960"/>
</dbReference>
<dbReference type="EnsemblPlants" id="AT1G78960.3">
    <property type="protein sequence ID" value="AT1G78960.3"/>
    <property type="gene ID" value="AT1G78960"/>
</dbReference>
<dbReference type="GeneID" id="844236"/>
<dbReference type="Gramene" id="AT1G78960.1">
    <property type="protein sequence ID" value="AT1G78960.1"/>
    <property type="gene ID" value="AT1G78960"/>
</dbReference>
<dbReference type="Gramene" id="AT1G78960.2">
    <property type="protein sequence ID" value="AT1G78960.2"/>
    <property type="gene ID" value="AT1G78960"/>
</dbReference>
<dbReference type="Gramene" id="AT1G78960.3">
    <property type="protein sequence ID" value="AT1G78960.3"/>
    <property type="gene ID" value="AT1G78960"/>
</dbReference>
<dbReference type="KEGG" id="ath:AT1G78960"/>
<dbReference type="Araport" id="AT1G78960"/>
<dbReference type="TAIR" id="AT1G78960">
    <property type="gene designation" value="LUP2"/>
</dbReference>
<dbReference type="eggNOG" id="KOG0497">
    <property type="taxonomic scope" value="Eukaryota"/>
</dbReference>
<dbReference type="HOGENOM" id="CLU_009074_2_0_1"/>
<dbReference type="InParanoid" id="Q8RWT0"/>
<dbReference type="PhylomeDB" id="Q8RWT0"/>
<dbReference type="PRO" id="PR:Q8RWT0"/>
<dbReference type="Proteomes" id="UP000006548">
    <property type="component" value="Chromosome 1"/>
</dbReference>
<dbReference type="ExpressionAtlas" id="Q8RWT0">
    <property type="expression patterns" value="baseline and differential"/>
</dbReference>
<dbReference type="GO" id="GO:0005811">
    <property type="term" value="C:lipid droplet"/>
    <property type="evidence" value="ECO:0007669"/>
    <property type="project" value="InterPro"/>
</dbReference>
<dbReference type="GO" id="GO:0042300">
    <property type="term" value="F:beta-amyrin synthase activity"/>
    <property type="evidence" value="ECO:0000314"/>
    <property type="project" value="TAIR"/>
</dbReference>
<dbReference type="GO" id="GO:0042299">
    <property type="term" value="F:lupeol synthase activity"/>
    <property type="evidence" value="ECO:0007669"/>
    <property type="project" value="UniProtKB-EC"/>
</dbReference>
<dbReference type="GO" id="GO:0016104">
    <property type="term" value="P:triterpenoid biosynthetic process"/>
    <property type="evidence" value="ECO:0000314"/>
    <property type="project" value="TAIR"/>
</dbReference>
<dbReference type="CDD" id="cd02892">
    <property type="entry name" value="SQCY_1"/>
    <property type="match status" value="1"/>
</dbReference>
<dbReference type="FunFam" id="1.50.10.20:FF:000044">
    <property type="entry name" value="Lupeol synthase"/>
    <property type="match status" value="1"/>
</dbReference>
<dbReference type="FunFam" id="1.50.10.20:FF:000011">
    <property type="entry name" value="Terpene cyclase/mutase family member"/>
    <property type="match status" value="1"/>
</dbReference>
<dbReference type="Gene3D" id="1.50.10.20">
    <property type="match status" value="2"/>
</dbReference>
<dbReference type="InterPro" id="IPR032696">
    <property type="entry name" value="SQ_cyclase_C"/>
</dbReference>
<dbReference type="InterPro" id="IPR032697">
    <property type="entry name" value="SQ_cyclase_N"/>
</dbReference>
<dbReference type="InterPro" id="IPR018333">
    <property type="entry name" value="Squalene_cyclase"/>
</dbReference>
<dbReference type="InterPro" id="IPR002365">
    <property type="entry name" value="Terpene_synthase_CS"/>
</dbReference>
<dbReference type="InterPro" id="IPR008930">
    <property type="entry name" value="Terpenoid_cyclase/PrenylTrfase"/>
</dbReference>
<dbReference type="NCBIfam" id="TIGR01787">
    <property type="entry name" value="squalene_cyclas"/>
    <property type="match status" value="1"/>
</dbReference>
<dbReference type="PANTHER" id="PTHR11764:SF52">
    <property type="entry name" value="AMYRIN SYNTHASE LUP2-RELATED"/>
    <property type="match status" value="1"/>
</dbReference>
<dbReference type="PANTHER" id="PTHR11764">
    <property type="entry name" value="TERPENE CYCLASE/MUTASE FAMILY MEMBER"/>
    <property type="match status" value="1"/>
</dbReference>
<dbReference type="Pfam" id="PF13243">
    <property type="entry name" value="SQHop_cyclase_C"/>
    <property type="match status" value="1"/>
</dbReference>
<dbReference type="Pfam" id="PF13249">
    <property type="entry name" value="SQHop_cyclase_N"/>
    <property type="match status" value="1"/>
</dbReference>
<dbReference type="SUPFAM" id="SSF48239">
    <property type="entry name" value="Terpenoid cyclases/Protein prenyltransferases"/>
    <property type="match status" value="2"/>
</dbReference>
<dbReference type="PROSITE" id="PS01074">
    <property type="entry name" value="TERPENE_SYNTHASES"/>
    <property type="match status" value="1"/>
</dbReference>
<sequence>MWKLKIGEGNGEDPYLFSSNNFVGRQTWEFDPKAGTPEERAAVEDARRNYLDNRPRVKGCSDLLWRMQFLKEAKFEQVIPPVKIDDGEGITYKNATDALRRAVSFYSALQSSDGHWPAEITGTLFFLPPLVFCFYITGHLEKIFDAEHRKEMLRHIYCHQNEDGGWGLHIEGKSVMFCTVLNYICLRMLGEGPNGGRNNACKRARQWILDHGGVTYIPSWGKIWLSILGIYDWSGTNPMPPEIWLLPSFFPIHLGKTLCYTRMVYMPMSYLYGKRFVGPLTPLIMLLRKELHLQPYEEINWNKARRLCAKEDMIYPHPLVQDLLWDTLHNFVEPILTNWPLKKLVREKALRVAMEHIHYEDENSHYITIGCVEKVLCMLACWIENPNGDHFKKHLARIPDFMWVAEDGLKMQSFGSQLWDTVFAIQALLACDLSDETDDVLRKGHSFIKKSQVRENPSGDFKSMYRHISKGAWTLSDRDHGWQVSDCTAEALKCCMLLSMMPAEVVGQKIDPEQLYDSVNLLLSLQGEKGGLTAWEPVRAQEWLELLNPTDFFTCVMAEREYVECTSAVIQALVLFKQLYPDHRTKEIIKSIEKGVQFIESKQTPDGSWHGNWGICFIYATWFALSGLAAAGKTYKSCLAVRKGVDFLLAIQEEDGGWGESHLSCPEQRYIPLEGNRSNLVQTAWAMMGLIHAGQAERDPTPLHRAAKLIITSQLENGDFPQQEILGVFMNTCMLHYATYRNIFPLWALAEYRKAAFATHQDL</sequence>
<reference key="1">
    <citation type="journal article" date="2000" name="Nature">
        <title>Sequence and analysis of chromosome 1 of the plant Arabidopsis thaliana.</title>
        <authorList>
            <person name="Theologis A."/>
            <person name="Ecker J.R."/>
            <person name="Palm C.J."/>
            <person name="Federspiel N.A."/>
            <person name="Kaul S."/>
            <person name="White O."/>
            <person name="Alonso J."/>
            <person name="Altafi H."/>
            <person name="Araujo R."/>
            <person name="Bowman C.L."/>
            <person name="Brooks S.Y."/>
            <person name="Buehler E."/>
            <person name="Chan A."/>
            <person name="Chao Q."/>
            <person name="Chen H."/>
            <person name="Cheuk R.F."/>
            <person name="Chin C.W."/>
            <person name="Chung M.K."/>
            <person name="Conn L."/>
            <person name="Conway A.B."/>
            <person name="Conway A.R."/>
            <person name="Creasy T.H."/>
            <person name="Dewar K."/>
            <person name="Dunn P."/>
            <person name="Etgu P."/>
            <person name="Feldblyum T.V."/>
            <person name="Feng J.-D."/>
            <person name="Fong B."/>
            <person name="Fujii C.Y."/>
            <person name="Gill J.E."/>
            <person name="Goldsmith A.D."/>
            <person name="Haas B."/>
            <person name="Hansen N.F."/>
            <person name="Hughes B."/>
            <person name="Huizar L."/>
            <person name="Hunter J.L."/>
            <person name="Jenkins J."/>
            <person name="Johnson-Hopson C."/>
            <person name="Khan S."/>
            <person name="Khaykin E."/>
            <person name="Kim C.J."/>
            <person name="Koo H.L."/>
            <person name="Kremenetskaia I."/>
            <person name="Kurtz D.B."/>
            <person name="Kwan A."/>
            <person name="Lam B."/>
            <person name="Langin-Hooper S."/>
            <person name="Lee A."/>
            <person name="Lee J.M."/>
            <person name="Lenz C.A."/>
            <person name="Li J.H."/>
            <person name="Li Y.-P."/>
            <person name="Lin X."/>
            <person name="Liu S.X."/>
            <person name="Liu Z.A."/>
            <person name="Luros J.S."/>
            <person name="Maiti R."/>
            <person name="Marziali A."/>
            <person name="Militscher J."/>
            <person name="Miranda M."/>
            <person name="Nguyen M."/>
            <person name="Nierman W.C."/>
            <person name="Osborne B.I."/>
            <person name="Pai G."/>
            <person name="Peterson J."/>
            <person name="Pham P.K."/>
            <person name="Rizzo M."/>
            <person name="Rooney T."/>
            <person name="Rowley D."/>
            <person name="Sakano H."/>
            <person name="Salzberg S.L."/>
            <person name="Schwartz J.R."/>
            <person name="Shinn P."/>
            <person name="Southwick A.M."/>
            <person name="Sun H."/>
            <person name="Tallon L.J."/>
            <person name="Tambunga G."/>
            <person name="Toriumi M.J."/>
            <person name="Town C.D."/>
            <person name="Utterback T."/>
            <person name="Van Aken S."/>
            <person name="Vaysberg M."/>
            <person name="Vysotskaia V.S."/>
            <person name="Walker M."/>
            <person name="Wu D."/>
            <person name="Yu G."/>
            <person name="Fraser C.M."/>
            <person name="Venter J.C."/>
            <person name="Davis R.W."/>
        </authorList>
    </citation>
    <scope>NUCLEOTIDE SEQUENCE [LARGE SCALE GENOMIC DNA]</scope>
    <source>
        <strain>cv. Columbia</strain>
    </source>
</reference>
<reference key="2">
    <citation type="journal article" date="2017" name="Plant J.">
        <title>Araport11: a complete reannotation of the Arabidopsis thaliana reference genome.</title>
        <authorList>
            <person name="Cheng C.Y."/>
            <person name="Krishnakumar V."/>
            <person name="Chan A.P."/>
            <person name="Thibaud-Nissen F."/>
            <person name="Schobel S."/>
            <person name="Town C.D."/>
        </authorList>
    </citation>
    <scope>GENOME REANNOTATION</scope>
    <source>
        <strain>cv. Columbia</strain>
    </source>
</reference>
<reference key="3">
    <citation type="journal article" date="2003" name="Science">
        <title>Empirical analysis of transcriptional activity in the Arabidopsis genome.</title>
        <authorList>
            <person name="Yamada K."/>
            <person name="Lim J."/>
            <person name="Dale J.M."/>
            <person name="Chen H."/>
            <person name="Shinn P."/>
            <person name="Palm C.J."/>
            <person name="Southwick A.M."/>
            <person name="Wu H.C."/>
            <person name="Kim C.J."/>
            <person name="Nguyen M."/>
            <person name="Pham P.K."/>
            <person name="Cheuk R.F."/>
            <person name="Karlin-Newmann G."/>
            <person name="Liu S.X."/>
            <person name="Lam B."/>
            <person name="Sakano H."/>
            <person name="Wu T."/>
            <person name="Yu G."/>
            <person name="Miranda M."/>
            <person name="Quach H.L."/>
            <person name="Tripp M."/>
            <person name="Chang C.H."/>
            <person name="Lee J.M."/>
            <person name="Toriumi M.J."/>
            <person name="Chan M.M."/>
            <person name="Tang C.C."/>
            <person name="Onodera C.S."/>
            <person name="Deng J.M."/>
            <person name="Akiyama K."/>
            <person name="Ansari Y."/>
            <person name="Arakawa T."/>
            <person name="Banh J."/>
            <person name="Banno F."/>
            <person name="Bowser L."/>
            <person name="Brooks S.Y."/>
            <person name="Carninci P."/>
            <person name="Chao Q."/>
            <person name="Choy N."/>
            <person name="Enju A."/>
            <person name="Goldsmith A.D."/>
            <person name="Gurjal M."/>
            <person name="Hansen N.F."/>
            <person name="Hayashizaki Y."/>
            <person name="Johnson-Hopson C."/>
            <person name="Hsuan V.W."/>
            <person name="Iida K."/>
            <person name="Karnes M."/>
            <person name="Khan S."/>
            <person name="Koesema E."/>
            <person name="Ishida J."/>
            <person name="Jiang P.X."/>
            <person name="Jones T."/>
            <person name="Kawai J."/>
            <person name="Kamiya A."/>
            <person name="Meyers C."/>
            <person name="Nakajima M."/>
            <person name="Narusaka M."/>
            <person name="Seki M."/>
            <person name="Sakurai T."/>
            <person name="Satou M."/>
            <person name="Tamse R."/>
            <person name="Vaysberg M."/>
            <person name="Wallender E.K."/>
            <person name="Wong C."/>
            <person name="Yamamura Y."/>
            <person name="Yuan S."/>
            <person name="Shinozaki K."/>
            <person name="Davis R.W."/>
            <person name="Theologis A."/>
            <person name="Ecker J.R."/>
        </authorList>
    </citation>
    <scope>NUCLEOTIDE SEQUENCE [LARGE SCALE MRNA]</scope>
    <source>
        <strain>cv. Columbia</strain>
    </source>
</reference>
<reference key="4">
    <citation type="journal article" date="2001" name="Plant Mol. Biol.">
        <title>Molecular cloning and expression in yeast of 2,3-oxidosqualene-triterpenoid cyclases from Arabidopsis thaliana.</title>
        <authorList>
            <person name="Husselstein-Muller T."/>
            <person name="Schaller H."/>
            <person name="Benveniste P."/>
        </authorList>
    </citation>
    <scope>NUCLEOTIDE SEQUENCE [MRNA] OF 81-763</scope>
    <scope>FUNCTION</scope>
    <scope>CATALYTIC ACTIVITY</scope>
    <scope>NOMENCLATURE</scope>
    <source>
        <strain>cv. Columbia</strain>
        <tissue>Hypocotyl</tissue>
    </source>
</reference>
<reference key="5">
    <citation type="submission" date="2006-07" db="EMBL/GenBank/DDBJ databases">
        <title>Large-scale analysis of RIKEN Arabidopsis full-length (RAFL) cDNAs.</title>
        <authorList>
            <person name="Totoki Y."/>
            <person name="Seki M."/>
            <person name="Ishida J."/>
            <person name="Nakajima M."/>
            <person name="Enju A."/>
            <person name="Kamiya A."/>
            <person name="Narusaka M."/>
            <person name="Shin-i T."/>
            <person name="Nakagawa M."/>
            <person name="Sakamoto N."/>
            <person name="Oishi K."/>
            <person name="Kohara Y."/>
            <person name="Kobayashi M."/>
            <person name="Toyoda A."/>
            <person name="Sakaki Y."/>
            <person name="Sakurai T."/>
            <person name="Iida K."/>
            <person name="Akiyama K."/>
            <person name="Satou M."/>
            <person name="Toyoda T."/>
            <person name="Konagaya A."/>
            <person name="Carninci P."/>
            <person name="Kawai J."/>
            <person name="Hayashizaki Y."/>
            <person name="Shinozaki K."/>
        </authorList>
    </citation>
    <scope>NUCLEOTIDE SEQUENCE [LARGE SCALE MRNA] OF 209-763</scope>
    <source>
        <strain>cv. Columbia</strain>
    </source>
</reference>
<reference key="6">
    <citation type="journal article" date="2000" name="Tetrahedron Lett.">
        <title>A novel multifunctional triterpene synthase from Arabidopsis thaliana.</title>
        <authorList>
            <person name="Kushiro T."/>
            <person name="Shibuya M."/>
            <person name="Masuda K."/>
            <person name="Ebizuka Y."/>
        </authorList>
    </citation>
    <scope>FUNCTION</scope>
</reference>
<feature type="chain" id="PRO_0000366132" description="Amyrin synthase LUP2">
    <location>
        <begin position="1"/>
        <end position="763"/>
    </location>
</feature>
<feature type="repeat" description="PFTB 1">
    <location>
        <begin position="149"/>
        <end position="190"/>
    </location>
</feature>
<feature type="repeat" description="PFTB 2">
    <location>
        <begin position="592"/>
        <end position="632"/>
    </location>
</feature>
<feature type="repeat" description="PFTB 3">
    <location>
        <begin position="641"/>
        <end position="682"/>
    </location>
</feature>
<feature type="active site" description="Proton donor" evidence="1">
    <location>
        <position position="486"/>
    </location>
</feature>
<feature type="sequence conflict" description="In Ref. 4; AAC98864." evidence="4" ref="4">
    <original>L</original>
    <variation>S</variation>
    <location>
        <position position="515"/>
    </location>
</feature>
<feature type="sequence conflict" description="In Ref. 4; AAC98864." evidence="4" ref="4">
    <original>A</original>
    <variation>P</variation>
    <location>
        <position position="540"/>
    </location>
</feature>
<feature type="sequence conflict" description="In Ref. 4; AAC98864." evidence="4" ref="4">
    <original>Q</original>
    <variation>R</variation>
    <location>
        <position position="578"/>
    </location>
</feature>
<feature type="sequence conflict" description="In Ref. 4; AAC98864." evidence="4" ref="4">
    <original>E</original>
    <variation>G</variation>
    <location>
        <position position="667"/>
    </location>
</feature>
<feature type="sequence conflict" description="In Ref. 4; AAC98864." evidence="4" ref="4">
    <original>N</original>
    <variation>D</variation>
    <location>
        <position position="676"/>
    </location>
</feature>
<feature type="sequence conflict" description="In Ref. 4; AAC98864." evidence="4" ref="4">
    <original>A</original>
    <variation>G</variation>
    <location>
        <position position="686"/>
    </location>
</feature>
<feature type="sequence conflict" description="In Ref. 4; AAC98864." evidence="4" ref="4">
    <original>IIT</original>
    <variation>VIS</variation>
    <location>
        <begin position="710"/>
        <end position="712"/>
    </location>
</feature>
<feature type="sequence conflict" description="In Ref. 4; AAC98864." evidence="4" ref="4">
    <original>Q</original>
    <variation>R</variation>
    <location>
        <position position="722"/>
    </location>
</feature>
<feature type="sequence conflict" description="In Ref. 4; AAC98864." evidence="4" ref="4">
    <original>N</original>
    <variation>K</variation>
    <location>
        <position position="731"/>
    </location>
</feature>
<evidence type="ECO:0000250" key="1">
    <source>
        <dbReference type="UniProtKB" id="P48449"/>
    </source>
</evidence>
<evidence type="ECO:0000269" key="2">
    <source>
    </source>
</evidence>
<evidence type="ECO:0000269" key="3">
    <source ref="6"/>
</evidence>
<evidence type="ECO:0000305" key="4"/>
<accession>Q8RWT0</accession>
<accession>O64552</accession>
<accession>Q0WLS2</accession>
<accession>Q56X57</accession>
<accession>Q84L74</accession>